<reference key="1">
    <citation type="journal article" date="2009" name="Appl. Environ. Microbiol.">
        <title>Novel features of the polysaccharide-digesting gliding bacterium Flavobacterium johnsoniae as revealed by genome sequence analysis.</title>
        <authorList>
            <person name="McBride M.J."/>
            <person name="Xie G."/>
            <person name="Martens E.C."/>
            <person name="Lapidus A."/>
            <person name="Henrissat B."/>
            <person name="Rhodes R.G."/>
            <person name="Goltsman E."/>
            <person name="Wang W."/>
            <person name="Xu J."/>
            <person name="Hunnicutt D.W."/>
            <person name="Staroscik A.M."/>
            <person name="Hoover T.R."/>
            <person name="Cheng Y.Q."/>
            <person name="Stein J.L."/>
        </authorList>
    </citation>
    <scope>NUCLEOTIDE SEQUENCE [LARGE SCALE GENOMIC DNA]</scope>
    <source>
        <strain>ATCC 17061 / DSM 2064 / JCM 8514 / BCRC 14874 / CCUG 350202 / NBRC 14942 / NCIMB 11054 / UW101</strain>
    </source>
</reference>
<comment type="function">
    <text evidence="1">Catalyzes the reductive methylation of 2'-deoxyuridine-5'-monophosphate (dUMP) to 2'-deoxythymidine-5'-monophosphate (dTMP) while utilizing 5,10-methylenetetrahydrofolate (mTHF) as the methyl donor and reductant in the reaction, yielding dihydrofolate (DHF) as a by-product. This enzymatic reaction provides an intracellular de novo source of dTMP, an essential precursor for DNA biosynthesis.</text>
</comment>
<comment type="catalytic activity">
    <reaction evidence="1">
        <text>dUMP + (6R)-5,10-methylene-5,6,7,8-tetrahydrofolate = 7,8-dihydrofolate + dTMP</text>
        <dbReference type="Rhea" id="RHEA:12104"/>
        <dbReference type="ChEBI" id="CHEBI:15636"/>
        <dbReference type="ChEBI" id="CHEBI:57451"/>
        <dbReference type="ChEBI" id="CHEBI:63528"/>
        <dbReference type="ChEBI" id="CHEBI:246422"/>
        <dbReference type="EC" id="2.1.1.45"/>
    </reaction>
</comment>
<comment type="pathway">
    <text evidence="1">Pyrimidine metabolism; dTTP biosynthesis.</text>
</comment>
<comment type="subunit">
    <text evidence="1">Homodimer.</text>
</comment>
<comment type="subcellular location">
    <subcellularLocation>
        <location evidence="1">Cytoplasm</location>
    </subcellularLocation>
</comment>
<comment type="similarity">
    <text evidence="1">Belongs to the thymidylate synthase family. Bacterial-type ThyA subfamily.</text>
</comment>
<keyword id="KW-0963">Cytoplasm</keyword>
<keyword id="KW-0489">Methyltransferase</keyword>
<keyword id="KW-0545">Nucleotide biosynthesis</keyword>
<keyword id="KW-0808">Transferase</keyword>
<evidence type="ECO:0000255" key="1">
    <source>
        <dbReference type="HAMAP-Rule" id="MF_00008"/>
    </source>
</evidence>
<organism>
    <name type="scientific">Flavobacterium johnsoniae (strain ATCC 17061 / DSM 2064 / JCM 8514 / BCRC 14874 / CCUG 350202 / NBRC 14942 / NCIMB 11054 / UW101)</name>
    <name type="common">Cytophaga johnsonae</name>
    <dbReference type="NCBI Taxonomy" id="376686"/>
    <lineage>
        <taxon>Bacteria</taxon>
        <taxon>Pseudomonadati</taxon>
        <taxon>Bacteroidota</taxon>
        <taxon>Flavobacteriia</taxon>
        <taxon>Flavobacteriales</taxon>
        <taxon>Flavobacteriaceae</taxon>
        <taxon>Flavobacterium</taxon>
    </lineage>
</organism>
<accession>A5FJV8</accession>
<protein>
    <recommendedName>
        <fullName evidence="1">Thymidylate synthase</fullName>
        <shortName evidence="1">TS</shortName>
        <shortName evidence="1">TSase</shortName>
        <ecNumber evidence="1">2.1.1.45</ecNumber>
    </recommendedName>
</protein>
<dbReference type="EC" id="2.1.1.45" evidence="1"/>
<dbReference type="EMBL" id="CP000685">
    <property type="protein sequence ID" value="ABQ04503.1"/>
    <property type="molecule type" value="Genomic_DNA"/>
</dbReference>
<dbReference type="RefSeq" id="WP_012023550.1">
    <property type="nucleotide sequence ID" value="NC_009441.1"/>
</dbReference>
<dbReference type="SMR" id="A5FJV8"/>
<dbReference type="STRING" id="376686.Fjoh_1471"/>
<dbReference type="KEGG" id="fjo:Fjoh_1471"/>
<dbReference type="eggNOG" id="COG0207">
    <property type="taxonomic scope" value="Bacteria"/>
</dbReference>
<dbReference type="HOGENOM" id="CLU_021669_0_0_10"/>
<dbReference type="OrthoDB" id="9774633at2"/>
<dbReference type="UniPathway" id="UPA00575"/>
<dbReference type="Proteomes" id="UP000006694">
    <property type="component" value="Chromosome"/>
</dbReference>
<dbReference type="GO" id="GO:0005829">
    <property type="term" value="C:cytosol"/>
    <property type="evidence" value="ECO:0007669"/>
    <property type="project" value="TreeGrafter"/>
</dbReference>
<dbReference type="GO" id="GO:0004799">
    <property type="term" value="F:thymidylate synthase activity"/>
    <property type="evidence" value="ECO:0007669"/>
    <property type="project" value="UniProtKB-UniRule"/>
</dbReference>
<dbReference type="GO" id="GO:0006231">
    <property type="term" value="P:dTMP biosynthetic process"/>
    <property type="evidence" value="ECO:0007669"/>
    <property type="project" value="UniProtKB-UniRule"/>
</dbReference>
<dbReference type="GO" id="GO:0006235">
    <property type="term" value="P:dTTP biosynthetic process"/>
    <property type="evidence" value="ECO:0007669"/>
    <property type="project" value="UniProtKB-UniRule"/>
</dbReference>
<dbReference type="GO" id="GO:0032259">
    <property type="term" value="P:methylation"/>
    <property type="evidence" value="ECO:0007669"/>
    <property type="project" value="UniProtKB-KW"/>
</dbReference>
<dbReference type="CDD" id="cd00351">
    <property type="entry name" value="TS_Pyrimidine_HMase"/>
    <property type="match status" value="1"/>
</dbReference>
<dbReference type="FunFam" id="3.30.572.10:FF:000013">
    <property type="entry name" value="Thymidylate synthase"/>
    <property type="match status" value="1"/>
</dbReference>
<dbReference type="Gene3D" id="3.30.572.10">
    <property type="entry name" value="Thymidylate synthase/dCMP hydroxymethylase domain"/>
    <property type="match status" value="1"/>
</dbReference>
<dbReference type="HAMAP" id="MF_00008">
    <property type="entry name" value="Thymidy_synth_bact"/>
    <property type="match status" value="1"/>
</dbReference>
<dbReference type="InterPro" id="IPR045097">
    <property type="entry name" value="Thymidate_synth/dCMP_Mease"/>
</dbReference>
<dbReference type="InterPro" id="IPR023451">
    <property type="entry name" value="Thymidate_synth/dCMP_Mease_dom"/>
</dbReference>
<dbReference type="InterPro" id="IPR036926">
    <property type="entry name" value="Thymidate_synth/dCMP_Mease_sf"/>
</dbReference>
<dbReference type="InterPro" id="IPR000398">
    <property type="entry name" value="Thymidylate_synthase"/>
</dbReference>
<dbReference type="NCBIfam" id="NF002497">
    <property type="entry name" value="PRK01827.1-3"/>
    <property type="match status" value="1"/>
</dbReference>
<dbReference type="NCBIfam" id="NF002499">
    <property type="entry name" value="PRK01827.1-5"/>
    <property type="match status" value="1"/>
</dbReference>
<dbReference type="NCBIfam" id="TIGR03284">
    <property type="entry name" value="thym_sym"/>
    <property type="match status" value="2"/>
</dbReference>
<dbReference type="PANTHER" id="PTHR11548:SF9">
    <property type="entry name" value="THYMIDYLATE SYNTHASE"/>
    <property type="match status" value="1"/>
</dbReference>
<dbReference type="PANTHER" id="PTHR11548">
    <property type="entry name" value="THYMIDYLATE SYNTHASE 1"/>
    <property type="match status" value="1"/>
</dbReference>
<dbReference type="Pfam" id="PF00303">
    <property type="entry name" value="Thymidylat_synt"/>
    <property type="match status" value="1"/>
</dbReference>
<dbReference type="PRINTS" id="PR00108">
    <property type="entry name" value="THYMDSNTHASE"/>
</dbReference>
<dbReference type="SUPFAM" id="SSF55831">
    <property type="entry name" value="Thymidylate synthase/dCMP hydroxymethylase"/>
    <property type="match status" value="1"/>
</dbReference>
<sequence>MKQYLDLVKHVLENGNQKGDRTGTGTKSVFGYQMRFDLSEGFPMVTTKKLHLKSIIYELLWFLKGDTNIKYLKENGVKIWDEWADSNGDLGPVYGHQWRNWNSEEIDQISELITELKTNPNSRRMIVSAWNPSVLPDTKKSFEENVANNKAALPPCHAFFQFYVASPDLEKGETKGKLSCQLYQRSADIFLGVPFNIASYALLTMMIAQVCDLEPGEFIHTFGDAHIYNNHFEQLELQLSREPKPLPKMILNPEIKNIFDFDYDDFTLVDYDPHPAIQGSVAV</sequence>
<name>TYSY_FLAJ1</name>
<proteinExistence type="inferred from homology"/>
<feature type="chain" id="PRO_1000073875" description="Thymidylate synthase">
    <location>
        <begin position="1"/>
        <end position="283"/>
    </location>
</feature>
<feature type="active site" description="Nucleophile" evidence="1">
    <location>
        <position position="156"/>
    </location>
</feature>
<feature type="binding site" description="in other chain" evidence="1">
    <location>
        <position position="21"/>
    </location>
    <ligand>
        <name>dUMP</name>
        <dbReference type="ChEBI" id="CHEBI:246422"/>
        <note>ligand shared between dimeric partners</note>
    </ligand>
</feature>
<feature type="binding site" evidence="1">
    <location>
        <position position="51"/>
    </location>
    <ligand>
        <name>(6R)-5,10-methylene-5,6,7,8-tetrahydrofolate</name>
        <dbReference type="ChEBI" id="CHEBI:15636"/>
    </ligand>
</feature>
<feature type="binding site" evidence="1">
    <location>
        <begin position="123"/>
        <end position="124"/>
    </location>
    <ligand>
        <name>dUMP</name>
        <dbReference type="ChEBI" id="CHEBI:246422"/>
        <note>ligand shared between dimeric partners</note>
    </ligand>
</feature>
<feature type="binding site" description="in other chain" evidence="1">
    <location>
        <begin position="185"/>
        <end position="188"/>
    </location>
    <ligand>
        <name>dUMP</name>
        <dbReference type="ChEBI" id="CHEBI:246422"/>
        <note>ligand shared between dimeric partners</note>
    </ligand>
</feature>
<feature type="binding site" evidence="1">
    <location>
        <position position="188"/>
    </location>
    <ligand>
        <name>(6R)-5,10-methylene-5,6,7,8-tetrahydrofolate</name>
        <dbReference type="ChEBI" id="CHEBI:15636"/>
    </ligand>
</feature>
<feature type="binding site" description="in other chain" evidence="1">
    <location>
        <position position="196"/>
    </location>
    <ligand>
        <name>dUMP</name>
        <dbReference type="ChEBI" id="CHEBI:246422"/>
        <note>ligand shared between dimeric partners</note>
    </ligand>
</feature>
<feature type="binding site" description="in other chain" evidence="1">
    <location>
        <begin position="226"/>
        <end position="228"/>
    </location>
    <ligand>
        <name>dUMP</name>
        <dbReference type="ChEBI" id="CHEBI:246422"/>
        <note>ligand shared between dimeric partners</note>
    </ligand>
</feature>
<feature type="binding site" evidence="1">
    <location>
        <position position="282"/>
    </location>
    <ligand>
        <name>(6R)-5,10-methylene-5,6,7,8-tetrahydrofolate</name>
        <dbReference type="ChEBI" id="CHEBI:15636"/>
    </ligand>
</feature>
<gene>
    <name evidence="1" type="primary">thyA</name>
    <name type="ordered locus">Fjoh_1471</name>
</gene>